<evidence type="ECO:0000250" key="1"/>
<evidence type="ECO:0000250" key="2">
    <source>
        <dbReference type="UniProtKB" id="P00306"/>
    </source>
</evidence>
<evidence type="ECO:0000305" key="3"/>
<proteinExistence type="inferred from homology"/>
<feature type="chain" id="PRO_0000277334" description="C-phycocyanin alpha chain">
    <location>
        <begin position="1"/>
        <end position="162"/>
    </location>
</feature>
<feature type="binding site" description="covalent" evidence="2">
    <location>
        <position position="84"/>
    </location>
    <ligand>
        <name>(2R,3E)-phycocyanobilin</name>
        <dbReference type="ChEBI" id="CHEBI:85275"/>
    </ligand>
</feature>
<accession>Q1XDA9</accession>
<sequence>MKTPITEAIASADSQGRFLSNGELQAINGRYQRAAASLGAARSLTNNAQRLITGAAQSVYTKFPYVTQMPGPTYASSAIGKAKCARDIGYYLRMVTYCLVVGATGPMDEYLVAGLEEINRSFELSPSWYVEALQYIKGSHGLSGQIGNEANVYLDYAINTLS</sequence>
<dbReference type="EMBL" id="AP006715">
    <property type="protein sequence ID" value="BAE92502.1"/>
    <property type="molecule type" value="Genomic_DNA"/>
</dbReference>
<dbReference type="RefSeq" id="YP_537059.1">
    <property type="nucleotide sequence ID" value="NC_007932.1"/>
</dbReference>
<dbReference type="SMR" id="Q1XDA9"/>
<dbReference type="GeneID" id="3978847"/>
<dbReference type="GO" id="GO:0009535">
    <property type="term" value="C:chloroplast thylakoid membrane"/>
    <property type="evidence" value="ECO:0007669"/>
    <property type="project" value="UniProtKB-SubCell"/>
</dbReference>
<dbReference type="GO" id="GO:0030089">
    <property type="term" value="C:phycobilisome"/>
    <property type="evidence" value="ECO:0007669"/>
    <property type="project" value="UniProtKB-KW"/>
</dbReference>
<dbReference type="GO" id="GO:0015979">
    <property type="term" value="P:photosynthesis"/>
    <property type="evidence" value="ECO:0007669"/>
    <property type="project" value="UniProtKB-KW"/>
</dbReference>
<dbReference type="CDD" id="cd14770">
    <property type="entry name" value="PC-PEC_alpha"/>
    <property type="match status" value="1"/>
</dbReference>
<dbReference type="Gene3D" id="1.10.490.20">
    <property type="entry name" value="Phycocyanins"/>
    <property type="match status" value="1"/>
</dbReference>
<dbReference type="InterPro" id="IPR009050">
    <property type="entry name" value="Globin-like_sf"/>
</dbReference>
<dbReference type="InterPro" id="IPR012128">
    <property type="entry name" value="Phycobilisome_asu/bsu"/>
</dbReference>
<dbReference type="InterPro" id="IPR038719">
    <property type="entry name" value="Phycobilisome_asu/bsu_sf"/>
</dbReference>
<dbReference type="InterPro" id="IPR006246">
    <property type="entry name" value="Phycocyanin_a"/>
</dbReference>
<dbReference type="NCBIfam" id="TIGR01338">
    <property type="entry name" value="phycocy_alpha"/>
    <property type="match status" value="1"/>
</dbReference>
<dbReference type="PANTHER" id="PTHR34011:SF4">
    <property type="entry name" value="C-PHYCOCYANIN ALPHA SUBUNIT"/>
    <property type="match status" value="1"/>
</dbReference>
<dbReference type="PANTHER" id="PTHR34011">
    <property type="entry name" value="PHYCOBILISOME 32.1 KDA LINKER POLYPEPTIDE, PHYCOCYANIN-ASSOCIATED, ROD 2-RELATED"/>
    <property type="match status" value="1"/>
</dbReference>
<dbReference type="Pfam" id="PF00502">
    <property type="entry name" value="Phycobilisome"/>
    <property type="match status" value="1"/>
</dbReference>
<dbReference type="PIRSF" id="PIRSF000081">
    <property type="entry name" value="Phycocyanin"/>
    <property type="match status" value="1"/>
</dbReference>
<dbReference type="SUPFAM" id="SSF46458">
    <property type="entry name" value="Globin-like"/>
    <property type="match status" value="1"/>
</dbReference>
<protein>
    <recommendedName>
        <fullName>C-phycocyanin alpha chain</fullName>
    </recommendedName>
</protein>
<geneLocation type="chloroplast"/>
<reference key="1">
    <citation type="submission" date="2003-11" db="EMBL/GenBank/DDBJ databases">
        <title>Whole genome sequence of Porphyra yezoensis chloroplast.</title>
        <authorList>
            <person name="Kunimoto M."/>
            <person name="Morishima K."/>
            <person name="Yoshikawa M."/>
            <person name="Fukuda S."/>
            <person name="Kobayashi T."/>
            <person name="Kobayashi M."/>
            <person name="Okazaki T."/>
            <person name="Ohara I."/>
            <person name="Nakayama I."/>
        </authorList>
    </citation>
    <scope>NUCLEOTIDE SEQUENCE [LARGE SCALE GENOMIC DNA]</scope>
    <source>
        <strain>U-51</strain>
    </source>
</reference>
<name>PHCA_PYRYE</name>
<organism>
    <name type="scientific">Pyropia yezoensis</name>
    <name type="common">Susabi-nori</name>
    <name type="synonym">Porphyra yezoensis</name>
    <dbReference type="NCBI Taxonomy" id="2788"/>
    <lineage>
        <taxon>Eukaryota</taxon>
        <taxon>Rhodophyta</taxon>
        <taxon>Bangiophyceae</taxon>
        <taxon>Bangiales</taxon>
        <taxon>Bangiaceae</taxon>
        <taxon>Pyropia</taxon>
    </lineage>
</organism>
<comment type="function">
    <text>Light-harvesting photosynthetic bile pigment-protein from the phycobiliprotein complex (phycobilisome, PBS). Phycocyanin is the major phycobiliprotein in the PBS rod.</text>
</comment>
<comment type="subunit">
    <text evidence="2">Heterodimer of an alpha and a beta subunit, which further assembles into trimers and the trimers into hexamers. The basic functional unit of phycobiliproteins is a ring-shaped hexamer formed from two back-to-back trimers contacting via the alpha chain subunits. The trimers are composed of alpha/beta subunit heterodimers arranged around a three-fold axis of symmetry. The phycoerythrins also contain a gamma subunit which is located in the center of the hexamer.</text>
</comment>
<comment type="subcellular location">
    <subcellularLocation>
        <location evidence="1">Plastid</location>
        <location evidence="1">Chloroplast thylakoid membrane</location>
        <topology evidence="1">Peripheral membrane protein</topology>
        <orientation evidence="1">Stromal side</orientation>
    </subcellularLocation>
    <text evidence="1">Part of the phycobilisome rod.</text>
</comment>
<comment type="PTM">
    <text evidence="2">Contains one covalently linked phycocyanobilin chromophore.</text>
</comment>
<comment type="similarity">
    <text evidence="3">Belongs to the phycobiliprotein family.</text>
</comment>
<gene>
    <name type="primary">cpcA</name>
</gene>
<keyword id="KW-0042">Antenna complex</keyword>
<keyword id="KW-0089">Bile pigment</keyword>
<keyword id="KW-0150">Chloroplast</keyword>
<keyword id="KW-0157">Chromophore</keyword>
<keyword id="KW-0249">Electron transport</keyword>
<keyword id="KW-0472">Membrane</keyword>
<keyword id="KW-0602">Photosynthesis</keyword>
<keyword id="KW-0605">Phycobilisome</keyword>
<keyword id="KW-0934">Plastid</keyword>
<keyword id="KW-0793">Thylakoid</keyword>
<keyword id="KW-0813">Transport</keyword>